<comment type="function">
    <text evidence="2">Has low cytotoxic activity.</text>
</comment>
<comment type="subcellular location">
    <subcellularLocation>
        <location evidence="4">Secreted</location>
    </subcellularLocation>
    <subcellularLocation>
        <location evidence="4">Target cell membrane</location>
    </subcellularLocation>
</comment>
<comment type="tissue specificity">
    <text evidence="5">Expressed by the venom gland.</text>
</comment>
<comment type="miscellaneous">
    <text evidence="5">Is classified as a P-type cytotoxin, since a proline residue stands at position 52 (Pro-31 in standard classification).</text>
</comment>
<comment type="similarity">
    <text evidence="5">Belongs to the three-finger toxin family. Short-chain subfamily. Orphan group XV sub-subfamily.</text>
</comment>
<accession>Q91137</accession>
<dbReference type="EMBL" id="X94318">
    <property type="protein sequence ID" value="CAA63979.1"/>
    <property type="molecule type" value="mRNA"/>
</dbReference>
<dbReference type="BMRB" id="Q91137"/>
<dbReference type="SMR" id="Q91137"/>
<dbReference type="GO" id="GO:0005576">
    <property type="term" value="C:extracellular region"/>
    <property type="evidence" value="ECO:0007669"/>
    <property type="project" value="UniProtKB-SubCell"/>
</dbReference>
<dbReference type="GO" id="GO:0016020">
    <property type="term" value="C:membrane"/>
    <property type="evidence" value="ECO:0007669"/>
    <property type="project" value="UniProtKB-KW"/>
</dbReference>
<dbReference type="GO" id="GO:0044218">
    <property type="term" value="C:other organism cell membrane"/>
    <property type="evidence" value="ECO:0007669"/>
    <property type="project" value="UniProtKB-KW"/>
</dbReference>
<dbReference type="GO" id="GO:0090729">
    <property type="term" value="F:toxin activity"/>
    <property type="evidence" value="ECO:0007669"/>
    <property type="project" value="UniProtKB-KW"/>
</dbReference>
<dbReference type="GO" id="GO:0031640">
    <property type="term" value="P:killing of cells of another organism"/>
    <property type="evidence" value="ECO:0007669"/>
    <property type="project" value="UniProtKB-KW"/>
</dbReference>
<dbReference type="CDD" id="cd00206">
    <property type="entry name" value="TFP_snake_toxin"/>
    <property type="match status" value="1"/>
</dbReference>
<dbReference type="FunFam" id="2.10.60.10:FF:000024">
    <property type="entry name" value="Cytotoxin 1"/>
    <property type="match status" value="1"/>
</dbReference>
<dbReference type="Gene3D" id="2.10.60.10">
    <property type="entry name" value="CD59"/>
    <property type="match status" value="1"/>
</dbReference>
<dbReference type="InterPro" id="IPR003572">
    <property type="entry name" value="Cytotoxin_Cobra"/>
</dbReference>
<dbReference type="InterPro" id="IPR003571">
    <property type="entry name" value="Snake_3FTx"/>
</dbReference>
<dbReference type="InterPro" id="IPR045860">
    <property type="entry name" value="Snake_toxin-like_sf"/>
</dbReference>
<dbReference type="InterPro" id="IPR018354">
    <property type="entry name" value="Snake_toxin_con_site"/>
</dbReference>
<dbReference type="InterPro" id="IPR054131">
    <property type="entry name" value="Toxin_cobra-type"/>
</dbReference>
<dbReference type="Pfam" id="PF21947">
    <property type="entry name" value="Toxin_cobra-type"/>
    <property type="match status" value="1"/>
</dbReference>
<dbReference type="PRINTS" id="PR00282">
    <property type="entry name" value="CYTOTOXIN"/>
</dbReference>
<dbReference type="SUPFAM" id="SSF57302">
    <property type="entry name" value="Snake toxin-like"/>
    <property type="match status" value="1"/>
</dbReference>
<dbReference type="PROSITE" id="PS00272">
    <property type="entry name" value="SNAKE_TOXIN"/>
    <property type="match status" value="1"/>
</dbReference>
<reference key="1">
    <citation type="submission" date="1995-12" db="EMBL/GenBank/DDBJ databases">
        <title>Nucleotide sequence encoding cardiotoxin I-like protein with Thr-15 from Naja naja atra.</title>
        <authorList>
            <person name="Chang L.-S."/>
            <person name="Lin J."/>
            <person name="Wu P.-F."/>
        </authorList>
    </citation>
    <scope>NUCLEOTIDE SEQUENCE [MRNA]</scope>
    <source>
        <tissue>Venom gland</tissue>
    </source>
</reference>
<sequence>MKTLLLTMVVVTIVCLDLGYTLKCHNTQLPFIYKTCPEGKNLCFKATLKKFPLKFPVKRGCADNCPKNSALLKYVCCSSDKCN</sequence>
<name>3SOFL_NAJAT</name>
<evidence type="ECO:0000250" key="1"/>
<evidence type="ECO:0000250" key="2">
    <source>
        <dbReference type="UniProtKB" id="P14541"/>
    </source>
</evidence>
<evidence type="ECO:0000250" key="3">
    <source>
        <dbReference type="UniProtKB" id="P60301"/>
    </source>
</evidence>
<evidence type="ECO:0000250" key="4">
    <source>
        <dbReference type="UniProtKB" id="P62375"/>
    </source>
</evidence>
<evidence type="ECO:0000305" key="5"/>
<evidence type="ECO:0000312" key="6">
    <source>
        <dbReference type="EMBL" id="CAA63979.1"/>
    </source>
</evidence>
<feature type="signal peptide" evidence="1">
    <location>
        <begin position="1"/>
        <end position="21"/>
    </location>
</feature>
<feature type="chain" id="PRO_0000035379" description="Cytotoxin homolog 5">
    <location>
        <begin position="22"/>
        <end position="83"/>
    </location>
</feature>
<feature type="disulfide bond" evidence="3">
    <location>
        <begin position="24"/>
        <end position="43"/>
    </location>
</feature>
<feature type="disulfide bond" evidence="3">
    <location>
        <begin position="36"/>
        <end position="61"/>
    </location>
</feature>
<feature type="disulfide bond" evidence="3">
    <location>
        <begin position="65"/>
        <end position="76"/>
    </location>
</feature>
<feature type="disulfide bond" evidence="3">
    <location>
        <begin position="77"/>
        <end position="82"/>
    </location>
</feature>
<organism>
    <name type="scientific">Naja atra</name>
    <name type="common">Chinese cobra</name>
    <dbReference type="NCBI Taxonomy" id="8656"/>
    <lineage>
        <taxon>Eukaryota</taxon>
        <taxon>Metazoa</taxon>
        <taxon>Chordata</taxon>
        <taxon>Craniata</taxon>
        <taxon>Vertebrata</taxon>
        <taxon>Euteleostomi</taxon>
        <taxon>Lepidosauria</taxon>
        <taxon>Squamata</taxon>
        <taxon>Bifurcata</taxon>
        <taxon>Unidentata</taxon>
        <taxon>Episquamata</taxon>
        <taxon>Toxicofera</taxon>
        <taxon>Serpentes</taxon>
        <taxon>Colubroidea</taxon>
        <taxon>Elapidae</taxon>
        <taxon>Elapinae</taxon>
        <taxon>Naja</taxon>
    </lineage>
</organism>
<proteinExistence type="inferred from homology"/>
<keyword id="KW-0204">Cytolysis</keyword>
<keyword id="KW-1015">Disulfide bond</keyword>
<keyword id="KW-0354">Hemolysis</keyword>
<keyword id="KW-0472">Membrane</keyword>
<keyword id="KW-0964">Secreted</keyword>
<keyword id="KW-0732">Signal</keyword>
<keyword id="KW-1052">Target cell membrane</keyword>
<keyword id="KW-1053">Target membrane</keyword>
<keyword id="KW-0800">Toxin</keyword>
<protein>
    <recommendedName>
        <fullName evidence="5">Cytotoxin homolog 5</fullName>
    </recommendedName>
    <alternativeName>
        <fullName evidence="6">Cardiotoxin V-like</fullName>
    </alternativeName>
</protein>